<feature type="chain" id="PRO_0000352308" description="5-dehydro-2-deoxygluconokinase">
    <location>
        <begin position="1"/>
        <end position="331"/>
    </location>
</feature>
<keyword id="KW-0067">ATP-binding</keyword>
<keyword id="KW-0418">Kinase</keyword>
<keyword id="KW-0547">Nucleotide-binding</keyword>
<keyword id="KW-1185">Reference proteome</keyword>
<keyword id="KW-0808">Transferase</keyword>
<name>IOLC_PHOPR</name>
<gene>
    <name evidence="1" type="primary">iolC</name>
    <name type="synonym">SC8F11</name>
    <name type="ordered locus">PBPRB0464</name>
</gene>
<reference key="1">
    <citation type="journal article" date="2005" name="Science">
        <title>Life at depth: Photobacterium profundum genome sequence and expression analysis.</title>
        <authorList>
            <person name="Vezzi A."/>
            <person name="Campanaro S."/>
            <person name="D'Angelo M."/>
            <person name="Simonato F."/>
            <person name="Vitulo N."/>
            <person name="Lauro F.M."/>
            <person name="Cestaro A."/>
            <person name="Malacrida G."/>
            <person name="Simionati B."/>
            <person name="Cannata N."/>
            <person name="Romualdi C."/>
            <person name="Bartlett D.H."/>
            <person name="Valle G."/>
        </authorList>
    </citation>
    <scope>NUCLEOTIDE SEQUENCE [LARGE SCALE GENOMIC DNA]</scope>
    <source>
        <strain>ATCC BAA-1253 / SS9</strain>
    </source>
</reference>
<evidence type="ECO:0000255" key="1">
    <source>
        <dbReference type="HAMAP-Rule" id="MF_01668"/>
    </source>
</evidence>
<accession>Q6LK43</accession>
<dbReference type="EC" id="2.7.1.92" evidence="1"/>
<dbReference type="EMBL" id="CR378676">
    <property type="protein sequence ID" value="CAG22337.1"/>
    <property type="molecule type" value="Genomic_DNA"/>
</dbReference>
<dbReference type="RefSeq" id="WP_011220546.1">
    <property type="nucleotide sequence ID" value="NC_006371.1"/>
</dbReference>
<dbReference type="SMR" id="Q6LK43"/>
<dbReference type="STRING" id="298386.PBPRB0464"/>
<dbReference type="KEGG" id="ppr:PBPRB0464"/>
<dbReference type="eggNOG" id="COG0524">
    <property type="taxonomic scope" value="Bacteria"/>
</dbReference>
<dbReference type="HOGENOM" id="CLU_027634_6_0_6"/>
<dbReference type="UniPathway" id="UPA00076">
    <property type="reaction ID" value="UER00146"/>
</dbReference>
<dbReference type="Proteomes" id="UP000000593">
    <property type="component" value="Chromosome 2"/>
</dbReference>
<dbReference type="GO" id="GO:0047590">
    <property type="term" value="F:5-dehydro-2-deoxygluconokinase activity"/>
    <property type="evidence" value="ECO:0007669"/>
    <property type="project" value="UniProtKB-UniRule"/>
</dbReference>
<dbReference type="GO" id="GO:0005524">
    <property type="term" value="F:ATP binding"/>
    <property type="evidence" value="ECO:0007669"/>
    <property type="project" value="UniProtKB-UniRule"/>
</dbReference>
<dbReference type="GO" id="GO:0019310">
    <property type="term" value="P:inositol catabolic process"/>
    <property type="evidence" value="ECO:0007669"/>
    <property type="project" value="UniProtKB-UniRule"/>
</dbReference>
<dbReference type="CDD" id="cd01166">
    <property type="entry name" value="KdgK"/>
    <property type="match status" value="1"/>
</dbReference>
<dbReference type="Gene3D" id="3.40.1190.20">
    <property type="match status" value="1"/>
</dbReference>
<dbReference type="Gene3D" id="2.20.150.10">
    <property type="entry name" value="putative 5-dehydro-2- deoxygluconokinase"/>
    <property type="match status" value="1"/>
</dbReference>
<dbReference type="HAMAP" id="MF_01668">
    <property type="entry name" value="IolC"/>
    <property type="match status" value="1"/>
</dbReference>
<dbReference type="InterPro" id="IPR002173">
    <property type="entry name" value="Carboh/pur_kinase_PfkB_CS"/>
</dbReference>
<dbReference type="InterPro" id="IPR022841">
    <property type="entry name" value="DKG_kinase_firmi"/>
</dbReference>
<dbReference type="InterPro" id="IPR030830">
    <property type="entry name" value="Myo_inos_IolC"/>
</dbReference>
<dbReference type="InterPro" id="IPR023314">
    <property type="entry name" value="Myo_inos_IolC-like_sf"/>
</dbReference>
<dbReference type="InterPro" id="IPR050306">
    <property type="entry name" value="PfkB_Carbo_kinase"/>
</dbReference>
<dbReference type="InterPro" id="IPR011611">
    <property type="entry name" value="PfkB_dom"/>
</dbReference>
<dbReference type="InterPro" id="IPR029056">
    <property type="entry name" value="Ribokinase-like"/>
</dbReference>
<dbReference type="NCBIfam" id="TIGR04382">
    <property type="entry name" value="myo_inos_iolC_N"/>
    <property type="match status" value="1"/>
</dbReference>
<dbReference type="PANTHER" id="PTHR43085:SF49">
    <property type="entry name" value="5-DEHYDRO-2-DEOXYGLUCONOKINASE"/>
    <property type="match status" value="1"/>
</dbReference>
<dbReference type="PANTHER" id="PTHR43085">
    <property type="entry name" value="HEXOKINASE FAMILY MEMBER"/>
    <property type="match status" value="1"/>
</dbReference>
<dbReference type="Pfam" id="PF00294">
    <property type="entry name" value="PfkB"/>
    <property type="match status" value="1"/>
</dbReference>
<dbReference type="SUPFAM" id="SSF53613">
    <property type="entry name" value="Ribokinase-like"/>
    <property type="match status" value="1"/>
</dbReference>
<dbReference type="PROSITE" id="PS00584">
    <property type="entry name" value="PFKB_KINASES_2"/>
    <property type="match status" value="1"/>
</dbReference>
<protein>
    <recommendedName>
        <fullName evidence="1">5-dehydro-2-deoxygluconokinase</fullName>
        <ecNumber evidence="1">2.7.1.92</ecNumber>
    </recommendedName>
    <alternativeName>
        <fullName evidence="1">2-deoxy-5-keto-D-gluconate kinase</fullName>
        <shortName evidence="1">DKG kinase</shortName>
    </alternativeName>
</protein>
<comment type="function">
    <text evidence="1">Catalyzes the phosphorylation of 5-dehydro-2-deoxy-D-gluconate (2-deoxy-5-keto-D-gluconate or DKG) to 6-phospho-5-dehydro-2-deoxy-D-gluconate (DKGP).</text>
</comment>
<comment type="catalytic activity">
    <reaction evidence="1">
        <text>5-dehydro-2-deoxy-D-gluconate + ATP = 6-phospho-5-dehydro-2-deoxy-D-gluconate + ADP + H(+)</text>
        <dbReference type="Rhea" id="RHEA:13497"/>
        <dbReference type="ChEBI" id="CHEBI:15378"/>
        <dbReference type="ChEBI" id="CHEBI:16669"/>
        <dbReference type="ChEBI" id="CHEBI:30616"/>
        <dbReference type="ChEBI" id="CHEBI:57949"/>
        <dbReference type="ChEBI" id="CHEBI:456216"/>
        <dbReference type="EC" id="2.7.1.92"/>
    </reaction>
</comment>
<comment type="pathway">
    <text evidence="1">Polyol metabolism; myo-inositol degradation into acetyl-CoA; acetyl-CoA from myo-inositol: step 5/7.</text>
</comment>
<comment type="similarity">
    <text evidence="1">Belongs to the carbohydrate kinase PfkB family.</text>
</comment>
<organism>
    <name type="scientific">Photobacterium profundum (strain SS9)</name>
    <dbReference type="NCBI Taxonomy" id="298386"/>
    <lineage>
        <taxon>Bacteria</taxon>
        <taxon>Pseudomonadati</taxon>
        <taxon>Pseudomonadota</taxon>
        <taxon>Gammaproteobacteria</taxon>
        <taxon>Vibrionales</taxon>
        <taxon>Vibrionaceae</taxon>
        <taxon>Photobacterium</taxon>
    </lineage>
</organism>
<proteinExistence type="inferred from homology"/>
<sequence length="331" mass="35574">MTKIALQQDRPLDAIVLGRAGVDLYAREANTDMADISGFNKFVGGSAANIAVAISKLGGKVGFIGCVADDAFGGYVRGYMTEQGINLDGMMTDNSGSRTSVAFTEMKPNDCTVLIYRNKASDLTLKPEQVDPAYIAQSKMLVVTGTALSESPSREATLIAMEHARRSNTVVVLDVDYRPYSWRTDVDASIYYGIAAGLSDIVIGNREEFDMMETVLAPGNTDDDATADRFLRANTQVVIVKAGELGSKVYCKDGHKFQQGIFRVEVKKPFGSGDSFAGGLIWTLVNGGELEDGVKHGSAAAAINVSGNSCTEAMPTKEVLFDFIETREQDL</sequence>